<gene>
    <name evidence="1" type="primary">idi1</name>
    <name type="ordered locus">plu3365</name>
</gene>
<name>IDI1_PHOLL</name>
<dbReference type="EC" id="5.3.3.2" evidence="1"/>
<dbReference type="EMBL" id="BX571870">
    <property type="protein sequence ID" value="CAE15739.1"/>
    <property type="molecule type" value="Genomic_DNA"/>
</dbReference>
<dbReference type="RefSeq" id="WP_011147549.1">
    <property type="nucleotide sequence ID" value="NC_005126.1"/>
</dbReference>
<dbReference type="SMR" id="Q7N1V4"/>
<dbReference type="STRING" id="243265.plu3365"/>
<dbReference type="GeneID" id="48849617"/>
<dbReference type="KEGG" id="plu:plu3365"/>
<dbReference type="eggNOG" id="COG1443">
    <property type="taxonomic scope" value="Bacteria"/>
</dbReference>
<dbReference type="HOGENOM" id="CLU_060552_2_1_6"/>
<dbReference type="OrthoDB" id="9809458at2"/>
<dbReference type="UniPathway" id="UPA00059">
    <property type="reaction ID" value="UER00104"/>
</dbReference>
<dbReference type="Proteomes" id="UP000002514">
    <property type="component" value="Chromosome"/>
</dbReference>
<dbReference type="GO" id="GO:0005737">
    <property type="term" value="C:cytoplasm"/>
    <property type="evidence" value="ECO:0007669"/>
    <property type="project" value="UniProtKB-SubCell"/>
</dbReference>
<dbReference type="GO" id="GO:0004452">
    <property type="term" value="F:isopentenyl-diphosphate delta-isomerase activity"/>
    <property type="evidence" value="ECO:0007669"/>
    <property type="project" value="UniProtKB-UniRule"/>
</dbReference>
<dbReference type="GO" id="GO:0046872">
    <property type="term" value="F:metal ion binding"/>
    <property type="evidence" value="ECO:0007669"/>
    <property type="project" value="UniProtKB-KW"/>
</dbReference>
<dbReference type="GO" id="GO:0050992">
    <property type="term" value="P:dimethylallyl diphosphate biosynthetic process"/>
    <property type="evidence" value="ECO:0007669"/>
    <property type="project" value="UniProtKB-UniRule"/>
</dbReference>
<dbReference type="GO" id="GO:0009240">
    <property type="term" value="P:isopentenyl diphosphate biosynthetic process"/>
    <property type="evidence" value="ECO:0007669"/>
    <property type="project" value="TreeGrafter"/>
</dbReference>
<dbReference type="CDD" id="cd02885">
    <property type="entry name" value="NUDIX_IPP_Isomerase"/>
    <property type="match status" value="1"/>
</dbReference>
<dbReference type="Gene3D" id="3.90.79.10">
    <property type="entry name" value="Nucleoside Triphosphate Pyrophosphohydrolase"/>
    <property type="match status" value="1"/>
</dbReference>
<dbReference type="HAMAP" id="MF_00202">
    <property type="entry name" value="Idi"/>
    <property type="match status" value="1"/>
</dbReference>
<dbReference type="InterPro" id="IPR056375">
    <property type="entry name" value="Idi_bact"/>
</dbReference>
<dbReference type="InterPro" id="IPR011876">
    <property type="entry name" value="IsopentenylPP_isomerase_typ1"/>
</dbReference>
<dbReference type="InterPro" id="IPR015797">
    <property type="entry name" value="NUDIX_hydrolase-like_dom_sf"/>
</dbReference>
<dbReference type="InterPro" id="IPR000086">
    <property type="entry name" value="NUDIX_hydrolase_dom"/>
</dbReference>
<dbReference type="NCBIfam" id="TIGR02150">
    <property type="entry name" value="IPP_isom_1"/>
    <property type="match status" value="1"/>
</dbReference>
<dbReference type="NCBIfam" id="NF002995">
    <property type="entry name" value="PRK03759.1"/>
    <property type="match status" value="1"/>
</dbReference>
<dbReference type="PANTHER" id="PTHR10885">
    <property type="entry name" value="ISOPENTENYL-DIPHOSPHATE DELTA-ISOMERASE"/>
    <property type="match status" value="1"/>
</dbReference>
<dbReference type="PANTHER" id="PTHR10885:SF0">
    <property type="entry name" value="ISOPENTENYL-DIPHOSPHATE DELTA-ISOMERASE"/>
    <property type="match status" value="1"/>
</dbReference>
<dbReference type="Pfam" id="PF00293">
    <property type="entry name" value="NUDIX"/>
    <property type="match status" value="1"/>
</dbReference>
<dbReference type="PIRSF" id="PIRSF018427">
    <property type="entry name" value="Isopntndiph_ism"/>
    <property type="match status" value="1"/>
</dbReference>
<dbReference type="SUPFAM" id="SSF55811">
    <property type="entry name" value="Nudix"/>
    <property type="match status" value="1"/>
</dbReference>
<dbReference type="PROSITE" id="PS51462">
    <property type="entry name" value="NUDIX"/>
    <property type="match status" value="1"/>
</dbReference>
<keyword id="KW-0963">Cytoplasm</keyword>
<keyword id="KW-0413">Isomerase</keyword>
<keyword id="KW-0414">Isoprene biosynthesis</keyword>
<keyword id="KW-0460">Magnesium</keyword>
<keyword id="KW-0464">Manganese</keyword>
<keyword id="KW-0479">Metal-binding</keyword>
<keyword id="KW-1185">Reference proteome</keyword>
<comment type="function">
    <text evidence="1">Catalyzes the 1,3-allylic rearrangement of the homoallylic substrate isopentenyl (IPP) to its highly electrophilic allylic isomer, dimethylallyl diphosphate (DMAPP).</text>
</comment>
<comment type="catalytic activity">
    <reaction evidence="1">
        <text>isopentenyl diphosphate = dimethylallyl diphosphate</text>
        <dbReference type="Rhea" id="RHEA:23284"/>
        <dbReference type="ChEBI" id="CHEBI:57623"/>
        <dbReference type="ChEBI" id="CHEBI:128769"/>
        <dbReference type="EC" id="5.3.3.2"/>
    </reaction>
</comment>
<comment type="cofactor">
    <cofactor evidence="1">
        <name>Mg(2+)</name>
        <dbReference type="ChEBI" id="CHEBI:18420"/>
    </cofactor>
    <text evidence="1">Binds 1 Mg(2+) ion per subunit. The magnesium ion binds only when substrate is bound.</text>
</comment>
<comment type="cofactor">
    <cofactor evidence="1">
        <name>Mn(2+)</name>
        <dbReference type="ChEBI" id="CHEBI:29035"/>
    </cofactor>
    <text evidence="1">Binds 1 Mn(2+) ion per subunit.</text>
</comment>
<comment type="pathway">
    <text evidence="1">Isoprenoid biosynthesis; dimethylallyl diphosphate biosynthesis; dimethylallyl diphosphate from isopentenyl diphosphate: step 1/1.</text>
</comment>
<comment type="subunit">
    <text evidence="1">Homodimer.</text>
</comment>
<comment type="subcellular location">
    <subcellularLocation>
        <location evidence="1">Cytoplasm</location>
    </subcellularLocation>
</comment>
<comment type="similarity">
    <text evidence="1">Belongs to the IPP isomerase type 1 family.</text>
</comment>
<sequence length="176" mass="20872">MENVVLVDENDNRVGCINKIDAHLNGDHLHRAFSCFIINSKNEVYIQQRAQSKLLWPGYWSNSYCSHPRPDEEISHAVMRRAEEELGIVINEEPKFLYKFQYKEKYKDVGYEHELCHVFVVFTDTPPTENPKEVSAGFFINIKDVQEYIHNNEEFCTPWFKKEWADILQNHFDKLC</sequence>
<proteinExistence type="inferred from homology"/>
<feature type="chain" id="PRO_0000205257" description="Isopentenyl-diphosphate Delta-isomerase 1">
    <location>
        <begin position="1"/>
        <end position="176"/>
    </location>
</feature>
<feature type="domain" description="Nudix hydrolase">
    <location>
        <begin position="28"/>
        <end position="162"/>
    </location>
</feature>
<feature type="active site" evidence="1">
    <location>
        <position position="65"/>
    </location>
</feature>
<feature type="active site" evidence="1">
    <location>
        <position position="114"/>
    </location>
</feature>
<feature type="binding site" evidence="1">
    <location>
        <position position="23"/>
    </location>
    <ligand>
        <name>Mn(2+)</name>
        <dbReference type="ChEBI" id="CHEBI:29035"/>
    </ligand>
</feature>
<feature type="binding site" evidence="1">
    <location>
        <position position="30"/>
    </location>
    <ligand>
        <name>Mn(2+)</name>
        <dbReference type="ChEBI" id="CHEBI:29035"/>
    </ligand>
</feature>
<feature type="binding site" evidence="1">
    <location>
        <position position="65"/>
    </location>
    <ligand>
        <name>Mg(2+)</name>
        <dbReference type="ChEBI" id="CHEBI:18420"/>
    </ligand>
</feature>
<feature type="binding site" evidence="1">
    <location>
        <position position="67"/>
    </location>
    <ligand>
        <name>Mn(2+)</name>
        <dbReference type="ChEBI" id="CHEBI:29035"/>
    </ligand>
</feature>
<feature type="binding site" evidence="1">
    <location>
        <position position="85"/>
    </location>
    <ligand>
        <name>Mg(2+)</name>
        <dbReference type="ChEBI" id="CHEBI:18420"/>
    </ligand>
</feature>
<feature type="binding site" evidence="1">
    <location>
        <position position="112"/>
    </location>
    <ligand>
        <name>Mn(2+)</name>
        <dbReference type="ChEBI" id="CHEBI:29035"/>
    </ligand>
</feature>
<feature type="binding site" evidence="1">
    <location>
        <position position="114"/>
    </location>
    <ligand>
        <name>Mn(2+)</name>
        <dbReference type="ChEBI" id="CHEBI:29035"/>
    </ligand>
</feature>
<protein>
    <recommendedName>
        <fullName evidence="1">Isopentenyl-diphosphate Delta-isomerase 1</fullName>
        <shortName evidence="1">IPP isomerase 1</shortName>
        <ecNumber evidence="1">5.3.3.2</ecNumber>
    </recommendedName>
    <alternativeName>
        <fullName evidence="1">IPP:DMAPP isomerase 1</fullName>
    </alternativeName>
    <alternativeName>
        <fullName evidence="1">Isopentenyl pyrophosphate isomerase 1</fullName>
    </alternativeName>
</protein>
<reference key="1">
    <citation type="journal article" date="2003" name="Nat. Biotechnol.">
        <title>The genome sequence of the entomopathogenic bacterium Photorhabdus luminescens.</title>
        <authorList>
            <person name="Duchaud E."/>
            <person name="Rusniok C."/>
            <person name="Frangeul L."/>
            <person name="Buchrieser C."/>
            <person name="Givaudan A."/>
            <person name="Taourit S."/>
            <person name="Bocs S."/>
            <person name="Boursaux-Eude C."/>
            <person name="Chandler M."/>
            <person name="Charles J.-F."/>
            <person name="Dassa E."/>
            <person name="Derose R."/>
            <person name="Derzelle S."/>
            <person name="Freyssinet G."/>
            <person name="Gaudriault S."/>
            <person name="Medigue C."/>
            <person name="Lanois A."/>
            <person name="Powell K."/>
            <person name="Siguier P."/>
            <person name="Vincent R."/>
            <person name="Wingate V."/>
            <person name="Zouine M."/>
            <person name="Glaser P."/>
            <person name="Boemare N."/>
            <person name="Danchin A."/>
            <person name="Kunst F."/>
        </authorList>
    </citation>
    <scope>NUCLEOTIDE SEQUENCE [LARGE SCALE GENOMIC DNA]</scope>
    <source>
        <strain>DSM 15139 / CIP 105565 / TT01</strain>
    </source>
</reference>
<organism>
    <name type="scientific">Photorhabdus laumondii subsp. laumondii (strain DSM 15139 / CIP 105565 / TT01)</name>
    <name type="common">Photorhabdus luminescens subsp. laumondii</name>
    <dbReference type="NCBI Taxonomy" id="243265"/>
    <lineage>
        <taxon>Bacteria</taxon>
        <taxon>Pseudomonadati</taxon>
        <taxon>Pseudomonadota</taxon>
        <taxon>Gammaproteobacteria</taxon>
        <taxon>Enterobacterales</taxon>
        <taxon>Morganellaceae</taxon>
        <taxon>Photorhabdus</taxon>
    </lineage>
</organism>
<accession>Q7N1V4</accession>
<evidence type="ECO:0000255" key="1">
    <source>
        <dbReference type="HAMAP-Rule" id="MF_00202"/>
    </source>
</evidence>